<accession>Q3KQV9</accession>
<accession>A2AMJ8</accession>
<accession>Q5SPZ2</accession>
<accession>Q69YQ3</accession>
<accession>Q6ZR38</accession>
<organism>
    <name type="scientific">Homo sapiens</name>
    <name type="common">Human</name>
    <dbReference type="NCBI Taxonomy" id="9606"/>
    <lineage>
        <taxon>Eukaryota</taxon>
        <taxon>Metazoa</taxon>
        <taxon>Chordata</taxon>
        <taxon>Craniata</taxon>
        <taxon>Vertebrata</taxon>
        <taxon>Euteleostomi</taxon>
        <taxon>Mammalia</taxon>
        <taxon>Eutheria</taxon>
        <taxon>Euarchontoglires</taxon>
        <taxon>Primates</taxon>
        <taxon>Haplorrhini</taxon>
        <taxon>Catarrhini</taxon>
        <taxon>Hominidae</taxon>
        <taxon>Homo</taxon>
    </lineage>
</organism>
<evidence type="ECO:0000250" key="1"/>
<evidence type="ECO:0000250" key="2">
    <source>
        <dbReference type="UniProtKB" id="Q9M9P3"/>
    </source>
</evidence>
<evidence type="ECO:0000256" key="3">
    <source>
        <dbReference type="SAM" id="MobiDB-lite"/>
    </source>
</evidence>
<evidence type="ECO:0000269" key="4">
    <source>
    </source>
</evidence>
<evidence type="ECO:0000303" key="5">
    <source>
    </source>
</evidence>
<evidence type="ECO:0000305" key="6"/>
<evidence type="ECO:0007829" key="7">
    <source>
        <dbReference type="PDB" id="8QH2"/>
    </source>
</evidence>
<gene>
    <name type="primary">UAP1L1</name>
</gene>
<proteinExistence type="evidence at protein level"/>
<name>UAP1L_HUMAN</name>
<keyword id="KW-0002">3D-structure</keyword>
<keyword id="KW-0025">Alternative splicing</keyword>
<keyword id="KW-0548">Nucleotidyltransferase</keyword>
<keyword id="KW-1267">Proteomics identification</keyword>
<keyword id="KW-1185">Reference proteome</keyword>
<keyword id="KW-0808">Transferase</keyword>
<protein>
    <recommendedName>
        <fullName>UDP-N-acetylhexosamine pyrophosphorylase-like protein 1</fullName>
        <ecNumber>2.7.7.-</ecNumber>
    </recommendedName>
</protein>
<reference key="1">
    <citation type="journal article" date="2004" name="Nat. Genet.">
        <title>Complete sequencing and characterization of 21,243 full-length human cDNAs.</title>
        <authorList>
            <person name="Ota T."/>
            <person name="Suzuki Y."/>
            <person name="Nishikawa T."/>
            <person name="Otsuki T."/>
            <person name="Sugiyama T."/>
            <person name="Irie R."/>
            <person name="Wakamatsu A."/>
            <person name="Hayashi K."/>
            <person name="Sato H."/>
            <person name="Nagai K."/>
            <person name="Kimura K."/>
            <person name="Makita H."/>
            <person name="Sekine M."/>
            <person name="Obayashi M."/>
            <person name="Nishi T."/>
            <person name="Shibahara T."/>
            <person name="Tanaka T."/>
            <person name="Ishii S."/>
            <person name="Yamamoto J."/>
            <person name="Saito K."/>
            <person name="Kawai Y."/>
            <person name="Isono Y."/>
            <person name="Nakamura Y."/>
            <person name="Nagahari K."/>
            <person name="Murakami K."/>
            <person name="Yasuda T."/>
            <person name="Iwayanagi T."/>
            <person name="Wagatsuma M."/>
            <person name="Shiratori A."/>
            <person name="Sudo H."/>
            <person name="Hosoiri T."/>
            <person name="Kaku Y."/>
            <person name="Kodaira H."/>
            <person name="Kondo H."/>
            <person name="Sugawara M."/>
            <person name="Takahashi M."/>
            <person name="Kanda K."/>
            <person name="Yokoi T."/>
            <person name="Furuya T."/>
            <person name="Kikkawa E."/>
            <person name="Omura Y."/>
            <person name="Abe K."/>
            <person name="Kamihara K."/>
            <person name="Katsuta N."/>
            <person name="Sato K."/>
            <person name="Tanikawa M."/>
            <person name="Yamazaki M."/>
            <person name="Ninomiya K."/>
            <person name="Ishibashi T."/>
            <person name="Yamashita H."/>
            <person name="Murakawa K."/>
            <person name="Fujimori K."/>
            <person name="Tanai H."/>
            <person name="Kimata M."/>
            <person name="Watanabe M."/>
            <person name="Hiraoka S."/>
            <person name="Chiba Y."/>
            <person name="Ishida S."/>
            <person name="Ono Y."/>
            <person name="Takiguchi S."/>
            <person name="Watanabe S."/>
            <person name="Yosida M."/>
            <person name="Hotuta T."/>
            <person name="Kusano J."/>
            <person name="Kanehori K."/>
            <person name="Takahashi-Fujii A."/>
            <person name="Hara H."/>
            <person name="Tanase T.-O."/>
            <person name="Nomura Y."/>
            <person name="Togiya S."/>
            <person name="Komai F."/>
            <person name="Hara R."/>
            <person name="Takeuchi K."/>
            <person name="Arita M."/>
            <person name="Imose N."/>
            <person name="Musashino K."/>
            <person name="Yuuki H."/>
            <person name="Oshima A."/>
            <person name="Sasaki N."/>
            <person name="Aotsuka S."/>
            <person name="Yoshikawa Y."/>
            <person name="Matsunawa H."/>
            <person name="Ichihara T."/>
            <person name="Shiohata N."/>
            <person name="Sano S."/>
            <person name="Moriya S."/>
            <person name="Momiyama H."/>
            <person name="Satoh N."/>
            <person name="Takami S."/>
            <person name="Terashima Y."/>
            <person name="Suzuki O."/>
            <person name="Nakagawa S."/>
            <person name="Senoh A."/>
            <person name="Mizoguchi H."/>
            <person name="Goto Y."/>
            <person name="Shimizu F."/>
            <person name="Wakebe H."/>
            <person name="Hishigaki H."/>
            <person name="Watanabe T."/>
            <person name="Sugiyama A."/>
            <person name="Takemoto M."/>
            <person name="Kawakami B."/>
            <person name="Yamazaki M."/>
            <person name="Watanabe K."/>
            <person name="Kumagai A."/>
            <person name="Itakura S."/>
            <person name="Fukuzumi Y."/>
            <person name="Fujimori Y."/>
            <person name="Komiyama M."/>
            <person name="Tashiro H."/>
            <person name="Tanigami A."/>
            <person name="Fujiwara T."/>
            <person name="Ono T."/>
            <person name="Yamada K."/>
            <person name="Fujii Y."/>
            <person name="Ozaki K."/>
            <person name="Hirao M."/>
            <person name="Ohmori Y."/>
            <person name="Kawabata A."/>
            <person name="Hikiji T."/>
            <person name="Kobatake N."/>
            <person name="Inagaki H."/>
            <person name="Ikema Y."/>
            <person name="Okamoto S."/>
            <person name="Okitani R."/>
            <person name="Kawakami T."/>
            <person name="Noguchi S."/>
            <person name="Itoh T."/>
            <person name="Shigeta K."/>
            <person name="Senba T."/>
            <person name="Matsumura K."/>
            <person name="Nakajima Y."/>
            <person name="Mizuno T."/>
            <person name="Morinaga M."/>
            <person name="Sasaki M."/>
            <person name="Togashi T."/>
            <person name="Oyama M."/>
            <person name="Hata H."/>
            <person name="Watanabe M."/>
            <person name="Komatsu T."/>
            <person name="Mizushima-Sugano J."/>
            <person name="Satoh T."/>
            <person name="Shirai Y."/>
            <person name="Takahashi Y."/>
            <person name="Nakagawa K."/>
            <person name="Okumura K."/>
            <person name="Nagase T."/>
            <person name="Nomura N."/>
            <person name="Kikuchi H."/>
            <person name="Masuho Y."/>
            <person name="Yamashita R."/>
            <person name="Nakai K."/>
            <person name="Yada T."/>
            <person name="Nakamura Y."/>
            <person name="Ohara O."/>
            <person name="Isogai T."/>
            <person name="Sugano S."/>
        </authorList>
    </citation>
    <scope>NUCLEOTIDE SEQUENCE [LARGE SCALE MRNA] (ISOFORM 2)</scope>
    <scope>VARIANT VAL-319</scope>
    <source>
        <tissue>Trachea</tissue>
    </source>
</reference>
<reference key="2">
    <citation type="journal article" date="2004" name="Nature">
        <title>DNA sequence and analysis of human chromosome 9.</title>
        <authorList>
            <person name="Humphray S.J."/>
            <person name="Oliver K."/>
            <person name="Hunt A.R."/>
            <person name="Plumb R.W."/>
            <person name="Loveland J.E."/>
            <person name="Howe K.L."/>
            <person name="Andrews T.D."/>
            <person name="Searle S."/>
            <person name="Hunt S.E."/>
            <person name="Scott C.E."/>
            <person name="Jones M.C."/>
            <person name="Ainscough R."/>
            <person name="Almeida J.P."/>
            <person name="Ambrose K.D."/>
            <person name="Ashwell R.I.S."/>
            <person name="Babbage A.K."/>
            <person name="Babbage S."/>
            <person name="Bagguley C.L."/>
            <person name="Bailey J."/>
            <person name="Banerjee R."/>
            <person name="Barker D.J."/>
            <person name="Barlow K.F."/>
            <person name="Bates K."/>
            <person name="Beasley H."/>
            <person name="Beasley O."/>
            <person name="Bird C.P."/>
            <person name="Bray-Allen S."/>
            <person name="Brown A.J."/>
            <person name="Brown J.Y."/>
            <person name="Burford D."/>
            <person name="Burrill W."/>
            <person name="Burton J."/>
            <person name="Carder C."/>
            <person name="Carter N.P."/>
            <person name="Chapman J.C."/>
            <person name="Chen Y."/>
            <person name="Clarke G."/>
            <person name="Clark S.Y."/>
            <person name="Clee C.M."/>
            <person name="Clegg S."/>
            <person name="Collier R.E."/>
            <person name="Corby N."/>
            <person name="Crosier M."/>
            <person name="Cummings A.T."/>
            <person name="Davies J."/>
            <person name="Dhami P."/>
            <person name="Dunn M."/>
            <person name="Dutta I."/>
            <person name="Dyer L.W."/>
            <person name="Earthrowl M.E."/>
            <person name="Faulkner L."/>
            <person name="Fleming C.J."/>
            <person name="Frankish A."/>
            <person name="Frankland J.A."/>
            <person name="French L."/>
            <person name="Fricker D.G."/>
            <person name="Garner P."/>
            <person name="Garnett J."/>
            <person name="Ghori J."/>
            <person name="Gilbert J.G.R."/>
            <person name="Glison C."/>
            <person name="Grafham D.V."/>
            <person name="Gribble S."/>
            <person name="Griffiths C."/>
            <person name="Griffiths-Jones S."/>
            <person name="Grocock R."/>
            <person name="Guy J."/>
            <person name="Hall R.E."/>
            <person name="Hammond S."/>
            <person name="Harley J.L."/>
            <person name="Harrison E.S.I."/>
            <person name="Hart E.A."/>
            <person name="Heath P.D."/>
            <person name="Henderson C.D."/>
            <person name="Hopkins B.L."/>
            <person name="Howard P.J."/>
            <person name="Howden P.J."/>
            <person name="Huckle E."/>
            <person name="Johnson C."/>
            <person name="Johnson D."/>
            <person name="Joy A.A."/>
            <person name="Kay M."/>
            <person name="Keenan S."/>
            <person name="Kershaw J.K."/>
            <person name="Kimberley A.M."/>
            <person name="King A."/>
            <person name="Knights A."/>
            <person name="Laird G.K."/>
            <person name="Langford C."/>
            <person name="Lawlor S."/>
            <person name="Leongamornlert D.A."/>
            <person name="Leversha M."/>
            <person name="Lloyd C."/>
            <person name="Lloyd D.M."/>
            <person name="Lovell J."/>
            <person name="Martin S."/>
            <person name="Mashreghi-Mohammadi M."/>
            <person name="Matthews L."/>
            <person name="McLaren S."/>
            <person name="McLay K.E."/>
            <person name="McMurray A."/>
            <person name="Milne S."/>
            <person name="Nickerson T."/>
            <person name="Nisbett J."/>
            <person name="Nordsiek G."/>
            <person name="Pearce A.V."/>
            <person name="Peck A.I."/>
            <person name="Porter K.M."/>
            <person name="Pandian R."/>
            <person name="Pelan S."/>
            <person name="Phillimore B."/>
            <person name="Povey S."/>
            <person name="Ramsey Y."/>
            <person name="Rand V."/>
            <person name="Scharfe M."/>
            <person name="Sehra H.K."/>
            <person name="Shownkeen R."/>
            <person name="Sims S.K."/>
            <person name="Skuce C.D."/>
            <person name="Smith M."/>
            <person name="Steward C.A."/>
            <person name="Swarbreck D."/>
            <person name="Sycamore N."/>
            <person name="Tester J."/>
            <person name="Thorpe A."/>
            <person name="Tracey A."/>
            <person name="Tromans A."/>
            <person name="Thomas D.W."/>
            <person name="Wall M."/>
            <person name="Wallis J.M."/>
            <person name="West A.P."/>
            <person name="Whitehead S.L."/>
            <person name="Willey D.L."/>
            <person name="Williams S.A."/>
            <person name="Wilming L."/>
            <person name="Wray P.W."/>
            <person name="Young L."/>
            <person name="Ashurst J.L."/>
            <person name="Coulson A."/>
            <person name="Blocker H."/>
            <person name="Durbin R.M."/>
            <person name="Sulston J.E."/>
            <person name="Hubbard T."/>
            <person name="Jackson M.J."/>
            <person name="Bentley D.R."/>
            <person name="Beck S."/>
            <person name="Rogers J."/>
            <person name="Dunham I."/>
        </authorList>
    </citation>
    <scope>NUCLEOTIDE SEQUENCE [LARGE SCALE GENOMIC DNA]</scope>
</reference>
<reference key="3">
    <citation type="submission" date="2005-07" db="EMBL/GenBank/DDBJ databases">
        <authorList>
            <person name="Mural R.J."/>
            <person name="Istrail S."/>
            <person name="Sutton G.G."/>
            <person name="Florea L."/>
            <person name="Halpern A.L."/>
            <person name="Mobarry C.M."/>
            <person name="Lippert R."/>
            <person name="Walenz B."/>
            <person name="Shatkay H."/>
            <person name="Dew I."/>
            <person name="Miller J.R."/>
            <person name="Flanigan M.J."/>
            <person name="Edwards N.J."/>
            <person name="Bolanos R."/>
            <person name="Fasulo D."/>
            <person name="Halldorsson B.V."/>
            <person name="Hannenhalli S."/>
            <person name="Turner R."/>
            <person name="Yooseph S."/>
            <person name="Lu F."/>
            <person name="Nusskern D.R."/>
            <person name="Shue B.C."/>
            <person name="Zheng X.H."/>
            <person name="Zhong F."/>
            <person name="Delcher A.L."/>
            <person name="Huson D.H."/>
            <person name="Kravitz S.A."/>
            <person name="Mouchard L."/>
            <person name="Reinert K."/>
            <person name="Remington K.A."/>
            <person name="Clark A.G."/>
            <person name="Waterman M.S."/>
            <person name="Eichler E.E."/>
            <person name="Adams M.D."/>
            <person name="Hunkapiller M.W."/>
            <person name="Myers E.W."/>
            <person name="Venter J.C."/>
        </authorList>
    </citation>
    <scope>NUCLEOTIDE SEQUENCE [LARGE SCALE GENOMIC DNA]</scope>
</reference>
<reference key="4">
    <citation type="journal article" date="2007" name="BMC Genomics">
        <title>The full-ORF clone resource of the German cDNA consortium.</title>
        <authorList>
            <person name="Bechtel S."/>
            <person name="Rosenfelder H."/>
            <person name="Duda A."/>
            <person name="Schmidt C.P."/>
            <person name="Ernst U."/>
            <person name="Wellenreuther R."/>
            <person name="Mehrle A."/>
            <person name="Schuster C."/>
            <person name="Bahr A."/>
            <person name="Bloecker H."/>
            <person name="Heubner D."/>
            <person name="Hoerlein A."/>
            <person name="Michel G."/>
            <person name="Wedler H."/>
            <person name="Koehrer K."/>
            <person name="Ottenwaelder B."/>
            <person name="Poustka A."/>
            <person name="Wiemann S."/>
            <person name="Schupp I."/>
        </authorList>
    </citation>
    <scope>NUCLEOTIDE SEQUENCE [LARGE SCALE MRNA] OF 72-507 (ISOFORM 1)</scope>
    <source>
        <tissue>Melanoma</tissue>
    </source>
</reference>
<reference key="5">
    <citation type="journal article" date="2004" name="Genome Res.">
        <title>The status, quality, and expansion of the NIH full-length cDNA project: the Mammalian Gene Collection (MGC).</title>
        <authorList>
            <consortium name="The MGC Project Team"/>
        </authorList>
    </citation>
    <scope>NUCLEOTIDE SEQUENCE [LARGE SCALE MRNA] OF 91-507 (ISOFORM 1)</scope>
    <source>
        <tissue>Skin</tissue>
    </source>
</reference>
<reference key="6">
    <citation type="journal article" date="2011" name="BMC Syst. Biol.">
        <title>Initial characterization of the human central proteome.</title>
        <authorList>
            <person name="Burkard T.R."/>
            <person name="Planyavsky M."/>
            <person name="Kaupe I."/>
            <person name="Breitwieser F.P."/>
            <person name="Buerckstuemmer T."/>
            <person name="Bennett K.L."/>
            <person name="Superti-Furga G."/>
            <person name="Colinge J."/>
        </authorList>
    </citation>
    <scope>IDENTIFICATION BY MASS SPECTROMETRY [LARGE SCALE ANALYSIS]</scope>
</reference>
<sequence>MASEQDVRARLQRAGQEHLLRFWAELAPEPRAALLAELALLEPEALREHCRRAAEACARPHGPPPDLAARLRPLPPERVGRASRSDPETRRRWEEEGFRQISLNKVAVLLLAGGQGTRLGVTYPKGMYRVGLPSRKTLYQLQAERIRRVEQLAGERHGTRCTVPWYVMTSEFTLGPTAEFFREHNFFHLDPANVVMFEQRLLPAVTFDGKVILERKDKVAMAPDGNGGLYCALEDHKILEDMERRGVEFVHVYCVDNILVRLADPVFIGFCVLQGADCGAKVVEKAYPEEPVGVVCQVDGVPQVVEYSEISPETAQLRASDGSLLYNAGNICNHFFTRGFLKAVTREFEPLLKPHVAVKKVPYVDEEGNLVKPLKPNGIKMEKFVFDVFRFAKNFAALEVLREEEFSPLKNAEPADRDSPRTARQALLTQHYRWALRAGARFLDAHGAWLPELPSLPPNGDPPAICEISPLVSYSGEGLEVYLQGREFQSPLILDEDQAREPQLQES</sequence>
<dbReference type="EC" id="2.7.7.-"/>
<dbReference type="EMBL" id="AK128529">
    <property type="protein sequence ID" value="BAC87482.1"/>
    <property type="molecule type" value="mRNA"/>
</dbReference>
<dbReference type="EMBL" id="AL807752">
    <property type="status" value="NOT_ANNOTATED_CDS"/>
    <property type="molecule type" value="Genomic_DNA"/>
</dbReference>
<dbReference type="EMBL" id="CH471090">
    <property type="protein sequence ID" value="EAW88342.1"/>
    <property type="molecule type" value="Genomic_DNA"/>
</dbReference>
<dbReference type="EMBL" id="CH471090">
    <property type="protein sequence ID" value="EAW88343.1"/>
    <property type="status" value="ALT_SEQ"/>
    <property type="molecule type" value="Genomic_DNA"/>
</dbReference>
<dbReference type="EMBL" id="BC106035">
    <property type="protein sequence ID" value="AAI06036.1"/>
    <property type="status" value="ALT_INIT"/>
    <property type="molecule type" value="mRNA"/>
</dbReference>
<dbReference type="EMBL" id="AL832421">
    <property type="protein sequence ID" value="CAH10651.1"/>
    <property type="status" value="ALT_INIT"/>
    <property type="molecule type" value="mRNA"/>
</dbReference>
<dbReference type="CCDS" id="CCDS7028.2">
    <molecule id="Q3KQV9-1"/>
</dbReference>
<dbReference type="RefSeq" id="NP_997192.2">
    <molecule id="Q3KQV9-1"/>
    <property type="nucleotide sequence ID" value="NM_207309.3"/>
</dbReference>
<dbReference type="PDB" id="8QH2">
    <property type="method" value="X-ray"/>
    <property type="resolution" value="2.75 A"/>
    <property type="chains" value="A=58-507"/>
</dbReference>
<dbReference type="PDBsum" id="8QH2"/>
<dbReference type="SMR" id="Q3KQV9"/>
<dbReference type="BioGRID" id="124823">
    <property type="interactions" value="15"/>
</dbReference>
<dbReference type="FunCoup" id="Q3KQV9">
    <property type="interactions" value="368"/>
</dbReference>
<dbReference type="IntAct" id="Q3KQV9">
    <property type="interactions" value="1"/>
</dbReference>
<dbReference type="STRING" id="9606.ENSP00000386935"/>
<dbReference type="GlyCosmos" id="Q3KQV9">
    <property type="glycosylation" value="2 sites, 1 glycan"/>
</dbReference>
<dbReference type="GlyGen" id="Q3KQV9">
    <property type="glycosylation" value="2 sites, 1 O-linked glycan (2 sites)"/>
</dbReference>
<dbReference type="iPTMnet" id="Q3KQV9"/>
<dbReference type="PhosphoSitePlus" id="Q3KQV9"/>
<dbReference type="BioMuta" id="UAP1L1"/>
<dbReference type="DMDM" id="172046714"/>
<dbReference type="jPOST" id="Q3KQV9"/>
<dbReference type="MassIVE" id="Q3KQV9"/>
<dbReference type="PaxDb" id="9606-ENSP00000386935"/>
<dbReference type="PeptideAtlas" id="Q3KQV9"/>
<dbReference type="ProteomicsDB" id="61728">
    <molecule id="Q3KQV9-1"/>
</dbReference>
<dbReference type="ProteomicsDB" id="61729">
    <molecule id="Q3KQV9-2"/>
</dbReference>
<dbReference type="Pumba" id="Q3KQV9"/>
<dbReference type="TopDownProteomics" id="Q3KQV9-1">
    <molecule id="Q3KQV9-1"/>
</dbReference>
<dbReference type="Antibodypedia" id="52196">
    <property type="antibodies" value="83 antibodies from 19 providers"/>
</dbReference>
<dbReference type="DNASU" id="91373"/>
<dbReference type="Ensembl" id="ENST00000360271.3">
    <molecule id="Q3KQV9-2"/>
    <property type="protein sequence ID" value="ENSP00000353409.3"/>
    <property type="gene ID" value="ENSG00000197355.11"/>
</dbReference>
<dbReference type="Ensembl" id="ENST00000409858.8">
    <molecule id="Q3KQV9-1"/>
    <property type="protein sequence ID" value="ENSP00000386935.3"/>
    <property type="gene ID" value="ENSG00000197355.11"/>
</dbReference>
<dbReference type="GeneID" id="91373"/>
<dbReference type="KEGG" id="hsa:91373"/>
<dbReference type="MANE-Select" id="ENST00000409858.8">
    <property type="protein sequence ID" value="ENSP00000386935.3"/>
    <property type="RefSeq nucleotide sequence ID" value="NM_207309.3"/>
    <property type="RefSeq protein sequence ID" value="NP_997192.2"/>
</dbReference>
<dbReference type="UCSC" id="uc004cla.5">
    <molecule id="Q3KQV9-1"/>
    <property type="organism name" value="human"/>
</dbReference>
<dbReference type="AGR" id="HGNC:28082"/>
<dbReference type="CTD" id="91373"/>
<dbReference type="DisGeNET" id="91373"/>
<dbReference type="GeneCards" id="UAP1L1"/>
<dbReference type="HGNC" id="HGNC:28082">
    <property type="gene designation" value="UAP1L1"/>
</dbReference>
<dbReference type="HPA" id="ENSG00000197355">
    <property type="expression patterns" value="Low tissue specificity"/>
</dbReference>
<dbReference type="neXtProt" id="NX_Q3KQV9"/>
<dbReference type="OpenTargets" id="ENSG00000197355"/>
<dbReference type="PharmGKB" id="PA134943810"/>
<dbReference type="VEuPathDB" id="HostDB:ENSG00000197355"/>
<dbReference type="eggNOG" id="KOG2388">
    <property type="taxonomic scope" value="Eukaryota"/>
</dbReference>
<dbReference type="GeneTree" id="ENSGT00940000153464"/>
<dbReference type="HOGENOM" id="CLU_025603_1_0_1"/>
<dbReference type="InParanoid" id="Q3KQV9"/>
<dbReference type="OMA" id="THCTVPW"/>
<dbReference type="OrthoDB" id="532420at2759"/>
<dbReference type="PAN-GO" id="Q3KQV9">
    <property type="GO annotations" value="2 GO annotations based on evolutionary models"/>
</dbReference>
<dbReference type="PhylomeDB" id="Q3KQV9"/>
<dbReference type="TreeFam" id="TF300611"/>
<dbReference type="PathwayCommons" id="Q3KQV9"/>
<dbReference type="BioGRID-ORCS" id="91373">
    <property type="hits" value="29 hits in 1152 CRISPR screens"/>
</dbReference>
<dbReference type="ChiTaRS" id="UAP1L1">
    <property type="organism name" value="human"/>
</dbReference>
<dbReference type="GenomeRNAi" id="91373"/>
<dbReference type="Pharos" id="Q3KQV9">
    <property type="development level" value="Tbio"/>
</dbReference>
<dbReference type="PRO" id="PR:Q3KQV9"/>
<dbReference type="Proteomes" id="UP000005640">
    <property type="component" value="Chromosome 9"/>
</dbReference>
<dbReference type="RNAct" id="Q3KQV9">
    <property type="molecule type" value="protein"/>
</dbReference>
<dbReference type="Bgee" id="ENSG00000197355">
    <property type="expression patterns" value="Expressed in stromal cell of endometrium and 113 other cell types or tissues"/>
</dbReference>
<dbReference type="ExpressionAtlas" id="Q3KQV9">
    <property type="expression patterns" value="baseline and differential"/>
</dbReference>
<dbReference type="GO" id="GO:0003977">
    <property type="term" value="F:UDP-N-acetylglucosamine diphosphorylase activity"/>
    <property type="evidence" value="ECO:0000318"/>
    <property type="project" value="GO_Central"/>
</dbReference>
<dbReference type="GO" id="GO:0006048">
    <property type="term" value="P:UDP-N-acetylglucosamine biosynthetic process"/>
    <property type="evidence" value="ECO:0000318"/>
    <property type="project" value="GO_Central"/>
</dbReference>
<dbReference type="CDD" id="cd04193">
    <property type="entry name" value="UDPGlcNAc_PPase"/>
    <property type="match status" value="1"/>
</dbReference>
<dbReference type="FunFam" id="3.90.550.10:FF:000043">
    <property type="entry name" value="UDP-N-acetylhexosamine pyrophosphorylase isoform X2"/>
    <property type="match status" value="1"/>
</dbReference>
<dbReference type="FunFam" id="2.10.10.100:FF:000002">
    <property type="entry name" value="UDP-N-acetylhexosamine pyrophosphorylase-like protein 1"/>
    <property type="match status" value="1"/>
</dbReference>
<dbReference type="Gene3D" id="2.10.10.100">
    <property type="match status" value="1"/>
</dbReference>
<dbReference type="Gene3D" id="3.90.550.10">
    <property type="entry name" value="Spore Coat Polysaccharide Biosynthesis Protein SpsA, Chain A"/>
    <property type="match status" value="1"/>
</dbReference>
<dbReference type="InterPro" id="IPR029044">
    <property type="entry name" value="Nucleotide-diphossugar_trans"/>
</dbReference>
<dbReference type="InterPro" id="IPR039741">
    <property type="entry name" value="UDP-sugar_pyrophosphorylase"/>
</dbReference>
<dbReference type="InterPro" id="IPR002618">
    <property type="entry name" value="UDPGP_fam"/>
</dbReference>
<dbReference type="PANTHER" id="PTHR11952">
    <property type="entry name" value="UDP- GLUCOSE PYROPHOSPHORYLASE"/>
    <property type="match status" value="1"/>
</dbReference>
<dbReference type="PANTHER" id="PTHR11952:SF6">
    <property type="entry name" value="UDP-N-ACETYLHEXOSAMINE PYROPHOSPHORYLASE-LIKE PROTEIN 1"/>
    <property type="match status" value="1"/>
</dbReference>
<dbReference type="Pfam" id="PF01704">
    <property type="entry name" value="UDPGP"/>
    <property type="match status" value="1"/>
</dbReference>
<dbReference type="SUPFAM" id="SSF53448">
    <property type="entry name" value="Nucleotide-diphospho-sugar transferases"/>
    <property type="match status" value="1"/>
</dbReference>
<feature type="chain" id="PRO_0000324580" description="UDP-N-acetylhexosamine pyrophosphorylase-like protein 1">
    <location>
        <begin position="1"/>
        <end position="507"/>
    </location>
</feature>
<feature type="region of interest" description="Disordered" evidence="3">
    <location>
        <begin position="56"/>
        <end position="91"/>
    </location>
</feature>
<feature type="short sequence motif" description="Substrate binding">
    <location>
        <begin position="111"/>
        <end position="114"/>
    </location>
</feature>
<feature type="short sequence motif" description="Substrate binding">
    <location>
        <begin position="306"/>
        <end position="307"/>
    </location>
</feature>
<feature type="compositionally biased region" description="Basic and acidic residues" evidence="3">
    <location>
        <begin position="78"/>
        <end position="91"/>
    </location>
</feature>
<feature type="binding site" evidence="2">
    <location>
        <begin position="111"/>
        <end position="114"/>
    </location>
    <ligand>
        <name>UTP</name>
        <dbReference type="ChEBI" id="CHEBI:46398"/>
    </ligand>
</feature>
<feature type="binding site" evidence="2">
    <location>
        <position position="125"/>
    </location>
    <ligand>
        <name>UTP</name>
        <dbReference type="ChEBI" id="CHEBI:46398"/>
    </ligand>
</feature>
<feature type="binding site" evidence="2">
    <location>
        <position position="199"/>
    </location>
    <ligand>
        <name>UTP</name>
        <dbReference type="ChEBI" id="CHEBI:46398"/>
    </ligand>
</feature>
<feature type="binding site" evidence="2">
    <location>
        <position position="225"/>
    </location>
    <ligand>
        <name>UTP</name>
        <dbReference type="ChEBI" id="CHEBI:46398"/>
    </ligand>
</feature>
<feature type="binding site" evidence="1">
    <location>
        <position position="226"/>
    </location>
    <ligand>
        <name>substrate</name>
    </ligand>
</feature>
<feature type="binding site" evidence="2">
    <location>
        <position position="256"/>
    </location>
    <ligand>
        <name>UTP</name>
        <dbReference type="ChEBI" id="CHEBI:46398"/>
    </ligand>
</feature>
<feature type="binding site" evidence="2">
    <location>
        <position position="380"/>
    </location>
    <ligand>
        <name>UTP</name>
        <dbReference type="ChEBI" id="CHEBI:46398"/>
    </ligand>
</feature>
<feature type="binding site" evidence="1">
    <location>
        <position position="410"/>
    </location>
    <ligand>
        <name>substrate</name>
    </ligand>
</feature>
<feature type="splice variant" id="VSP_032280" description="In isoform 2." evidence="5">
    <original>MASEQDVRARLQRAGQEHLLRFWAELAPEPRAALLAELALLEPEALREHCRRAAEACARPHGPPPDLAARLRPLPPERVGRASRSDPETRRRWEEEGFRQISLNKVAVLLLAGGQGTRLGVTYPKGMYRVGLPSRKTLYQLQAERIRRVEQLAGERHGTRCTVPW</original>
    <variation>MGPGPSPNWTLDPEPRCRLWSEPRLPAGPGVLAAGSPRLPCR</variation>
    <location>
        <begin position="1"/>
        <end position="165"/>
    </location>
</feature>
<feature type="sequence variant" id="VAR_039839" description="In dbSNP:rs7037849." evidence="4">
    <original>A</original>
    <variation>V</variation>
    <location>
        <position position="319"/>
    </location>
</feature>
<feature type="sequence variant" id="VAR_039840" description="In dbSNP:rs1122444.">
    <original>P</original>
    <variation>S</variation>
    <location>
        <position position="373"/>
    </location>
</feature>
<feature type="helix" evidence="7">
    <location>
        <begin position="90"/>
        <end position="102"/>
    </location>
</feature>
<feature type="strand" evidence="7">
    <location>
        <begin position="106"/>
        <end position="111"/>
    </location>
</feature>
<feature type="helix" evidence="7">
    <location>
        <begin position="125"/>
        <end position="127"/>
    </location>
</feature>
<feature type="helix" evidence="7">
    <location>
        <begin position="138"/>
        <end position="155"/>
    </location>
</feature>
<feature type="turn" evidence="7">
    <location>
        <begin position="156"/>
        <end position="158"/>
    </location>
</feature>
<feature type="strand" evidence="7">
    <location>
        <begin position="165"/>
        <end position="169"/>
    </location>
</feature>
<feature type="helix" evidence="7">
    <location>
        <begin position="171"/>
        <end position="183"/>
    </location>
</feature>
<feature type="helix" evidence="7">
    <location>
        <begin position="184"/>
        <end position="188"/>
    </location>
</feature>
<feature type="helix" evidence="7">
    <location>
        <begin position="191"/>
        <end position="193"/>
    </location>
</feature>
<feature type="strand" evidence="7">
    <location>
        <begin position="194"/>
        <end position="198"/>
    </location>
</feature>
<feature type="strand" evidence="7">
    <location>
        <begin position="201"/>
        <end position="203"/>
    </location>
</feature>
<feature type="strand" evidence="7">
    <location>
        <begin position="213"/>
        <end position="215"/>
    </location>
</feature>
<feature type="strand" evidence="7">
    <location>
        <begin position="221"/>
        <end position="223"/>
    </location>
</feature>
<feature type="helix" evidence="7">
    <location>
        <begin position="226"/>
        <end position="228"/>
    </location>
</feature>
<feature type="helix" evidence="7">
    <location>
        <begin position="229"/>
        <end position="234"/>
    </location>
</feature>
<feature type="turn" evidence="7">
    <location>
        <begin position="235"/>
        <end position="237"/>
    </location>
</feature>
<feature type="helix" evidence="7">
    <location>
        <begin position="238"/>
        <end position="243"/>
    </location>
</feature>
<feature type="turn" evidence="7">
    <location>
        <begin position="244"/>
        <end position="246"/>
    </location>
</feature>
<feature type="strand" evidence="7">
    <location>
        <begin position="249"/>
        <end position="254"/>
    </location>
</feature>
<feature type="helix" evidence="7">
    <location>
        <begin position="265"/>
        <end position="273"/>
    </location>
</feature>
<feature type="strand" evidence="7">
    <location>
        <begin position="277"/>
        <end position="284"/>
    </location>
</feature>
<feature type="strand" evidence="7">
    <location>
        <begin position="294"/>
        <end position="298"/>
    </location>
</feature>
<feature type="strand" evidence="7">
    <location>
        <begin position="301"/>
        <end position="305"/>
    </location>
</feature>
<feature type="turn" evidence="7">
    <location>
        <begin position="307"/>
        <end position="309"/>
    </location>
</feature>
<feature type="helix" evidence="7">
    <location>
        <begin position="312"/>
        <end position="314"/>
    </location>
</feature>
<feature type="strand" evidence="7">
    <location>
        <begin position="322"/>
        <end position="324"/>
    </location>
</feature>
<feature type="strand" evidence="7">
    <location>
        <begin position="328"/>
        <end position="337"/>
    </location>
</feature>
<feature type="helix" evidence="7">
    <location>
        <begin position="338"/>
        <end position="345"/>
    </location>
</feature>
<feature type="turn" evidence="7">
    <location>
        <begin position="346"/>
        <end position="348"/>
    </location>
</feature>
<feature type="helix" evidence="7">
    <location>
        <begin position="349"/>
        <end position="351"/>
    </location>
</feature>
<feature type="strand" evidence="7">
    <location>
        <begin position="355"/>
        <end position="359"/>
    </location>
</feature>
<feature type="strand" evidence="7">
    <location>
        <begin position="378"/>
        <end position="382"/>
    </location>
</feature>
<feature type="helix" evidence="7">
    <location>
        <begin position="385"/>
        <end position="389"/>
    </location>
</feature>
<feature type="strand" evidence="7">
    <location>
        <begin position="393"/>
        <end position="399"/>
    </location>
</feature>
<feature type="helix" evidence="7">
    <location>
        <begin position="402"/>
        <end position="405"/>
    </location>
</feature>
<feature type="strand" evidence="7">
    <location>
        <begin position="416"/>
        <end position="419"/>
    </location>
</feature>
<feature type="helix" evidence="7">
    <location>
        <begin position="420"/>
        <end position="436"/>
    </location>
</feature>
<feature type="turn" evidence="7">
    <location>
        <begin position="437"/>
        <end position="439"/>
    </location>
</feature>
<feature type="strand" evidence="7">
    <location>
        <begin position="441"/>
        <end position="444"/>
    </location>
</feature>
<feature type="strand" evidence="7">
    <location>
        <begin position="466"/>
        <end position="468"/>
    </location>
</feature>
<feature type="turn" evidence="7">
    <location>
        <begin position="470"/>
        <end position="472"/>
    </location>
</feature>
<feature type="strand" evidence="7">
    <location>
        <begin position="474"/>
        <end position="476"/>
    </location>
</feature>
<feature type="helix" evidence="7">
    <location>
        <begin position="480"/>
        <end position="483"/>
    </location>
</feature>
<feature type="strand" evidence="7">
    <location>
        <begin position="487"/>
        <end position="490"/>
    </location>
</feature>
<feature type="strand" evidence="7">
    <location>
        <begin position="492"/>
        <end position="494"/>
    </location>
</feature>
<comment type="alternative products">
    <event type="alternative splicing"/>
    <isoform>
        <id>Q3KQV9-1</id>
        <name>1</name>
        <sequence type="displayed"/>
    </isoform>
    <isoform>
        <id>Q3KQV9-2</id>
        <name>2</name>
        <sequence type="described" ref="VSP_032280"/>
    </isoform>
</comment>
<comment type="similarity">
    <text evidence="6">Belongs to the UDPGP type 1 family.</text>
</comment>
<comment type="sequence caution" evidence="6">
    <conflict type="erroneous initiation">
        <sequence resource="EMBL-CDS" id="AAI06036"/>
    </conflict>
    <text>Extended N-terminus.</text>
</comment>
<comment type="sequence caution" evidence="6">
    <conflict type="erroneous initiation">
        <sequence resource="EMBL-CDS" id="CAH10651"/>
    </conflict>
    <text>Truncated N-terminus.</text>
</comment>
<comment type="sequence caution" evidence="6">
    <conflict type="erroneous gene model prediction">
        <sequence resource="EMBL-CDS" id="EAW88343"/>
    </conflict>
</comment>